<organism>
    <name type="scientific">Xenopus tropicalis</name>
    <name type="common">Western clawed frog</name>
    <name type="synonym">Silurana tropicalis</name>
    <dbReference type="NCBI Taxonomy" id="8364"/>
    <lineage>
        <taxon>Eukaryota</taxon>
        <taxon>Metazoa</taxon>
        <taxon>Chordata</taxon>
        <taxon>Craniata</taxon>
        <taxon>Vertebrata</taxon>
        <taxon>Euteleostomi</taxon>
        <taxon>Amphibia</taxon>
        <taxon>Batrachia</taxon>
        <taxon>Anura</taxon>
        <taxon>Pipoidea</taxon>
        <taxon>Pipidae</taxon>
        <taxon>Xenopodinae</taxon>
        <taxon>Xenopus</taxon>
        <taxon>Silurana</taxon>
    </lineage>
</organism>
<proteinExistence type="inferred from homology"/>
<gene>
    <name type="primary">lbh</name>
    <name type="ORF">TEgg141o05.1</name>
</gene>
<protein>
    <recommendedName>
        <fullName>Protein LBH</fullName>
    </recommendedName>
</protein>
<sequence>MSVFYPIHCTDYLRSAEMTEVIMNTQPMDEIGLSPRKDSYQIFPDPSDFERCCKLKDRLPSIVVEPTEGDVESGELRWPPEEFVVDEDKEGSCDQTKKENEQ</sequence>
<comment type="function">
    <text evidence="1">Transcriptional activator.</text>
</comment>
<comment type="subcellular location">
    <subcellularLocation>
        <location evidence="1">Nucleus</location>
    </subcellularLocation>
    <subcellularLocation>
        <location evidence="1">Cytoplasm</location>
    </subcellularLocation>
</comment>
<comment type="similarity">
    <text evidence="4">Belongs to the LBH family.</text>
</comment>
<name>LBH_XENTR</name>
<keyword id="KW-0963">Cytoplasm</keyword>
<keyword id="KW-0539">Nucleus</keyword>
<keyword id="KW-1185">Reference proteome</keyword>
<keyword id="KW-0804">Transcription</keyword>
<keyword id="KW-0805">Transcription regulation</keyword>
<evidence type="ECO:0000250" key="1"/>
<evidence type="ECO:0000255" key="2"/>
<evidence type="ECO:0000256" key="3">
    <source>
        <dbReference type="SAM" id="MobiDB-lite"/>
    </source>
</evidence>
<evidence type="ECO:0000305" key="4"/>
<accession>Q5M7L2</accession>
<accession>Q28FB6</accession>
<feature type="chain" id="PRO_0000324807" description="Protein LBH">
    <location>
        <begin position="1"/>
        <end position="102"/>
    </location>
</feature>
<feature type="domain" description="LBH" evidence="2">
    <location>
        <begin position="18"/>
        <end position="101"/>
    </location>
</feature>
<feature type="region of interest" description="Disordered" evidence="3">
    <location>
        <begin position="66"/>
        <end position="102"/>
    </location>
</feature>
<feature type="compositionally biased region" description="Basic and acidic residues" evidence="3">
    <location>
        <begin position="90"/>
        <end position="102"/>
    </location>
</feature>
<feature type="sequence conflict" description="In Ref. 1; CAJ81937." evidence="4" ref="1">
    <original>L</original>
    <variation>M</variation>
    <location>
        <position position="55"/>
    </location>
</feature>
<reference key="1">
    <citation type="submission" date="2006-10" db="EMBL/GenBank/DDBJ databases">
        <authorList>
            <consortium name="Sanger Xenopus tropicalis EST/cDNA project"/>
        </authorList>
    </citation>
    <scope>NUCLEOTIDE SEQUENCE [LARGE SCALE MRNA]</scope>
    <source>
        <tissue>Egg</tissue>
    </source>
</reference>
<reference key="2">
    <citation type="submission" date="2004-12" db="EMBL/GenBank/DDBJ databases">
        <authorList>
            <consortium name="NIH - Xenopus Gene Collection (XGC) project"/>
        </authorList>
    </citation>
    <scope>NUCLEOTIDE SEQUENCE [LARGE SCALE MRNA]</scope>
    <source>
        <tissue>Embryo</tissue>
    </source>
</reference>
<dbReference type="EMBL" id="CR762050">
    <property type="protein sequence ID" value="CAJ81937.1"/>
    <property type="molecule type" value="mRNA"/>
</dbReference>
<dbReference type="EMBL" id="BC088576">
    <property type="protein sequence ID" value="AAH88576.1"/>
    <property type="molecule type" value="mRNA"/>
</dbReference>
<dbReference type="RefSeq" id="NP_001011389.1">
    <property type="nucleotide sequence ID" value="NM_001011389.1"/>
</dbReference>
<dbReference type="FunCoup" id="Q5M7L2">
    <property type="interactions" value="530"/>
</dbReference>
<dbReference type="STRING" id="8364.ENSXETP00000030213"/>
<dbReference type="PaxDb" id="8364-ENSXETP00000017424"/>
<dbReference type="DNASU" id="496858"/>
<dbReference type="GeneID" id="496858"/>
<dbReference type="KEGG" id="xtr:496858"/>
<dbReference type="AGR" id="Xenbase:XB-GENE-5945476"/>
<dbReference type="CTD" id="81606"/>
<dbReference type="Xenbase" id="XB-GENE-5945476">
    <property type="gene designation" value="lbh"/>
</dbReference>
<dbReference type="eggNOG" id="ENOG502S1QG">
    <property type="taxonomic scope" value="Eukaryota"/>
</dbReference>
<dbReference type="InParanoid" id="Q5M7L2"/>
<dbReference type="OMA" id="VFFPIHC"/>
<dbReference type="OrthoDB" id="8937789at2759"/>
<dbReference type="Proteomes" id="UP000008143">
    <property type="component" value="Chromosome 5"/>
</dbReference>
<dbReference type="Bgee" id="ENSXETG00000007948">
    <property type="expression patterns" value="Expressed in heart and 19 other cell types or tissues"/>
</dbReference>
<dbReference type="GO" id="GO:0005737">
    <property type="term" value="C:cytoplasm"/>
    <property type="evidence" value="ECO:0007669"/>
    <property type="project" value="UniProtKB-SubCell"/>
</dbReference>
<dbReference type="GO" id="GO:0005634">
    <property type="term" value="C:nucleus"/>
    <property type="evidence" value="ECO:0007669"/>
    <property type="project" value="UniProtKB-SubCell"/>
</dbReference>
<dbReference type="GO" id="GO:0006355">
    <property type="term" value="P:regulation of DNA-templated transcription"/>
    <property type="evidence" value="ECO:0007669"/>
    <property type="project" value="InterPro"/>
</dbReference>
<dbReference type="InterPro" id="IPR013294">
    <property type="entry name" value="LBH"/>
</dbReference>
<dbReference type="InterPro" id="IPR038990">
    <property type="entry name" value="LBH_dom"/>
</dbReference>
<dbReference type="InterPro" id="IPR042945">
    <property type="entry name" value="LBH_dom_prot"/>
</dbReference>
<dbReference type="PANTHER" id="PTHR14987:SF2">
    <property type="entry name" value="PROTEIN LBH"/>
    <property type="match status" value="1"/>
</dbReference>
<dbReference type="PANTHER" id="PTHR14987">
    <property type="entry name" value="PROTEIN LBH-RELATED"/>
    <property type="match status" value="1"/>
</dbReference>
<dbReference type="Pfam" id="PF15317">
    <property type="entry name" value="Lbh"/>
    <property type="match status" value="1"/>
</dbReference>
<dbReference type="PIRSF" id="PIRSF008130">
    <property type="entry name" value="LBH"/>
    <property type="match status" value="1"/>
</dbReference>
<dbReference type="PRINTS" id="PR01881">
    <property type="entry name" value="LBHPROTEIN"/>
</dbReference>